<reference key="1">
    <citation type="journal article" date="1970" name="Hoppe-Seyler's Z. Physiol. Chem.">
        <title>Plant protease inhibitors. VII. Amino acid sequence of the specific trypsin inhibitor from maize seeds, and characterization of the polymer.</title>
        <authorList>
            <person name="Hochstrasser K."/>
            <person name="Illchmann K."/>
            <person name="Werle E."/>
        </authorList>
    </citation>
    <scope>PROTEIN SEQUENCE</scope>
    <source>
        <tissue>Seed</tissue>
    </source>
</reference>
<organism>
    <name type="scientific">Zea mays</name>
    <name type="common">Maize</name>
    <dbReference type="NCBI Taxonomy" id="4577"/>
    <lineage>
        <taxon>Eukaryota</taxon>
        <taxon>Viridiplantae</taxon>
        <taxon>Streptophyta</taxon>
        <taxon>Embryophyta</taxon>
        <taxon>Tracheophyta</taxon>
        <taxon>Spermatophyta</taxon>
        <taxon>Magnoliopsida</taxon>
        <taxon>Liliopsida</taxon>
        <taxon>Poales</taxon>
        <taxon>Poaceae</taxon>
        <taxon>PACMAD clade</taxon>
        <taxon>Panicoideae</taxon>
        <taxon>Andropogonodae</taxon>
        <taxon>Andropogoneae</taxon>
        <taxon>Tripsacinae</taxon>
        <taxon>Zea</taxon>
    </lineage>
</organism>
<dbReference type="PIR" id="A01312">
    <property type="entry name" value="TIZM"/>
</dbReference>
<dbReference type="STRING" id="4577.P01073"/>
<dbReference type="MaizeGDB" id="69176"/>
<dbReference type="InParanoid" id="P01073"/>
<dbReference type="Proteomes" id="UP000007305">
    <property type="component" value="Unplaced"/>
</dbReference>
<dbReference type="GO" id="GO:0004867">
    <property type="term" value="F:serine-type endopeptidase inhibitor activity"/>
    <property type="evidence" value="ECO:0007669"/>
    <property type="project" value="UniProtKB-KW"/>
</dbReference>
<name>ITRY_MAIZE</name>
<feature type="chain" id="PRO_0000084272" description="Trypsin inhibitor">
    <location>
        <begin position="1"/>
        <end position="65"/>
    </location>
</feature>
<feature type="site" description="Reactive bond for trypsin" evidence="1">
    <location>
        <begin position="25"/>
        <end position="26"/>
    </location>
</feature>
<comment type="subunit">
    <text>Homotrimer.</text>
</comment>
<comment type="miscellaneous">
    <text>After interaction with trypsin, the inhibitor consists of two chains (residues 1-25 and 26-65 above) linked by disulfide bonds.</text>
</comment>
<protein>
    <recommendedName>
        <fullName>Trypsin inhibitor</fullName>
    </recommendedName>
</protein>
<proteinExistence type="evidence at protein level"/>
<accession>P01073</accession>
<sequence>SAGTSCVPPPSBGCHAILRTGIPGRLPPLZKTCGIGPRQVZRLQBLPCPGRRQLABMIAYCPRCR</sequence>
<keyword id="KW-0903">Direct protein sequencing</keyword>
<keyword id="KW-0646">Protease inhibitor</keyword>
<keyword id="KW-1185">Reference proteome</keyword>
<keyword id="KW-0722">Serine protease inhibitor</keyword>
<evidence type="ECO:0000269" key="1">
    <source>
    </source>
</evidence>